<evidence type="ECO:0000255" key="1">
    <source>
        <dbReference type="HAMAP-Rule" id="MF_00049"/>
    </source>
</evidence>
<feature type="chain" id="PRO_0000151976" description="Leucine--tRNA ligase">
    <location>
        <begin position="1"/>
        <end position="880"/>
    </location>
</feature>
<feature type="short sequence motif" description="'HIGH' region">
    <location>
        <begin position="49"/>
        <end position="59"/>
    </location>
</feature>
<feature type="short sequence motif" description="'KMSKS' region">
    <location>
        <begin position="638"/>
        <end position="642"/>
    </location>
</feature>
<feature type="binding site" evidence="1">
    <location>
        <position position="641"/>
    </location>
    <ligand>
        <name>ATP</name>
        <dbReference type="ChEBI" id="CHEBI:30616"/>
    </ligand>
</feature>
<protein>
    <recommendedName>
        <fullName evidence="1">Leucine--tRNA ligase</fullName>
        <ecNumber evidence="1">6.1.1.4</ecNumber>
    </recommendedName>
    <alternativeName>
        <fullName evidence="1">Leucyl-tRNA synthetase</fullName>
        <shortName evidence="1">LeuRS</shortName>
    </alternativeName>
</protein>
<reference key="1">
    <citation type="journal article" date="2004" name="Proc. Natl. Acad. Sci. U.S.A.">
        <title>The louse-borne human pathogen Bartonella quintana is a genomic derivative of the zoonotic agent Bartonella henselae.</title>
        <authorList>
            <person name="Alsmark U.C.M."/>
            <person name="Frank A.C."/>
            <person name="Karlberg E.O."/>
            <person name="Legault B.-A."/>
            <person name="Ardell D.H."/>
            <person name="Canbaeck B."/>
            <person name="Eriksson A.-S."/>
            <person name="Naeslund A.K."/>
            <person name="Handley S.A."/>
            <person name="Huvet M."/>
            <person name="La Scola B."/>
            <person name="Holmberg M."/>
            <person name="Andersson S.G.E."/>
        </authorList>
    </citation>
    <scope>NUCLEOTIDE SEQUENCE [LARGE SCALE GENOMIC DNA]</scope>
    <source>
        <strain>Toulouse</strain>
    </source>
</reference>
<sequence>MTIEHSNVGERYNPRAREQKWQAIWDEKKIFQITEENCREKYYVLEMFPYPSGRIHMGHVRNYTMGDVVARYKRAKGFDVLHPMGWDAFGMPAENAALQSKVHPKTWTYQNIAVMRGQLKQLGLSLDWSREFATCDVAYYHRQQMLFLDLYQKGLVARKVAKVNWDPVDQTVLANEQVVDGCGWRSGALVEQRELAQWFFKISDFSEDLLAGLEELEQWPEKVRTMQKNWIGKSQGLLIRWALKSTNGADEVCEAFNEVVCYSTRPDTLFGASFLALSVDHPISQALAQKDKALSAFIENCRCGGMTTAALETAEKQGFCTSLLAVHPFNPRIHLPVYIANFVLMDYGTGAVFGCPAHDQRDWDFAHKYDLPVQPVVLPKGSDAEDFVIAETPYTGDGVMINSDFLDGLTPQEAFEAAAERLEGQMLNGQPQGKRTVQFRLRDWGISRQRYWGCPIPIIHCAACGVVPVPRADLPVELPDDVTFDQPGNPLERHEKWQKVACPVCGQSAKRETDTMDTFVDSSWYYARFTAPWAQEPVDKNAIAEWLPVQQYIGGIEHAILHLLYARFFMRAMKLIGYVTVDEPFKGLFTQGMVVHETYRDDQGWVSPAEISIIEKDGKRQAHKLTDQSEVTIGLIEKMSKSKKNVVDPDDIIASYGADTVRWFVLSDSPPERDVIWTESGVEGAYRFVQRVWRCVVLSAPVLKEVIPCTGHQGAALELSKAAHRMLCTVEDDLEKFAFNRAIARLYEFLNIMAPLLNKIASVEDEMKASLRQAMDFFLALIAPIMPHLAEECHAALGGKTLICELPWPVYDPALIVEDCCTLPVQINGKKRGEVTVAATASEAMIEEAVLALDFVQAHLVEKSIKKMIIVPQRIVNVVL</sequence>
<accession>Q6FYL6</accession>
<keyword id="KW-0030">Aminoacyl-tRNA synthetase</keyword>
<keyword id="KW-0067">ATP-binding</keyword>
<keyword id="KW-0963">Cytoplasm</keyword>
<keyword id="KW-0436">Ligase</keyword>
<keyword id="KW-0547">Nucleotide-binding</keyword>
<keyword id="KW-0648">Protein biosynthesis</keyword>
<gene>
    <name evidence="1" type="primary">leuS</name>
    <name type="ordered locus">BQ12310</name>
</gene>
<comment type="catalytic activity">
    <reaction evidence="1">
        <text>tRNA(Leu) + L-leucine + ATP = L-leucyl-tRNA(Leu) + AMP + diphosphate</text>
        <dbReference type="Rhea" id="RHEA:11688"/>
        <dbReference type="Rhea" id="RHEA-COMP:9613"/>
        <dbReference type="Rhea" id="RHEA-COMP:9622"/>
        <dbReference type="ChEBI" id="CHEBI:30616"/>
        <dbReference type="ChEBI" id="CHEBI:33019"/>
        <dbReference type="ChEBI" id="CHEBI:57427"/>
        <dbReference type="ChEBI" id="CHEBI:78442"/>
        <dbReference type="ChEBI" id="CHEBI:78494"/>
        <dbReference type="ChEBI" id="CHEBI:456215"/>
        <dbReference type="EC" id="6.1.1.4"/>
    </reaction>
</comment>
<comment type="subcellular location">
    <subcellularLocation>
        <location evidence="1">Cytoplasm</location>
    </subcellularLocation>
</comment>
<comment type="similarity">
    <text evidence="1">Belongs to the class-I aminoacyl-tRNA synthetase family.</text>
</comment>
<organism>
    <name type="scientific">Bartonella quintana (strain Toulouse)</name>
    <name type="common">Rochalimaea quintana</name>
    <dbReference type="NCBI Taxonomy" id="283165"/>
    <lineage>
        <taxon>Bacteria</taxon>
        <taxon>Pseudomonadati</taxon>
        <taxon>Pseudomonadota</taxon>
        <taxon>Alphaproteobacteria</taxon>
        <taxon>Hyphomicrobiales</taxon>
        <taxon>Bartonellaceae</taxon>
        <taxon>Bartonella</taxon>
    </lineage>
</organism>
<dbReference type="EC" id="6.1.1.4" evidence="1"/>
<dbReference type="EMBL" id="BX897700">
    <property type="protein sequence ID" value="CAF26690.1"/>
    <property type="molecule type" value="Genomic_DNA"/>
</dbReference>
<dbReference type="RefSeq" id="WP_011179859.1">
    <property type="nucleotide sequence ID" value="NC_005955.1"/>
</dbReference>
<dbReference type="SMR" id="Q6FYL6"/>
<dbReference type="KEGG" id="bqu:BQ12310"/>
<dbReference type="eggNOG" id="COG0495">
    <property type="taxonomic scope" value="Bacteria"/>
</dbReference>
<dbReference type="HOGENOM" id="CLU_004427_0_0_5"/>
<dbReference type="OrthoDB" id="9810365at2"/>
<dbReference type="Proteomes" id="UP000000597">
    <property type="component" value="Chromosome"/>
</dbReference>
<dbReference type="GO" id="GO:0005829">
    <property type="term" value="C:cytosol"/>
    <property type="evidence" value="ECO:0007669"/>
    <property type="project" value="TreeGrafter"/>
</dbReference>
<dbReference type="GO" id="GO:0002161">
    <property type="term" value="F:aminoacyl-tRNA deacylase activity"/>
    <property type="evidence" value="ECO:0007669"/>
    <property type="project" value="InterPro"/>
</dbReference>
<dbReference type="GO" id="GO:0005524">
    <property type="term" value="F:ATP binding"/>
    <property type="evidence" value="ECO:0007669"/>
    <property type="project" value="UniProtKB-UniRule"/>
</dbReference>
<dbReference type="GO" id="GO:0004823">
    <property type="term" value="F:leucine-tRNA ligase activity"/>
    <property type="evidence" value="ECO:0007669"/>
    <property type="project" value="UniProtKB-UniRule"/>
</dbReference>
<dbReference type="GO" id="GO:0006429">
    <property type="term" value="P:leucyl-tRNA aminoacylation"/>
    <property type="evidence" value="ECO:0007669"/>
    <property type="project" value="UniProtKB-UniRule"/>
</dbReference>
<dbReference type="CDD" id="cd07958">
    <property type="entry name" value="Anticodon_Ia_Leu_BEm"/>
    <property type="match status" value="1"/>
</dbReference>
<dbReference type="CDD" id="cd00812">
    <property type="entry name" value="LeuRS_core"/>
    <property type="match status" value="1"/>
</dbReference>
<dbReference type="FunFam" id="1.10.730.10:FF:000002">
    <property type="entry name" value="Leucine--tRNA ligase"/>
    <property type="match status" value="1"/>
</dbReference>
<dbReference type="FunFam" id="3.40.50.620:FF:000003">
    <property type="entry name" value="Leucine--tRNA ligase"/>
    <property type="match status" value="1"/>
</dbReference>
<dbReference type="Gene3D" id="2.20.28.290">
    <property type="match status" value="1"/>
</dbReference>
<dbReference type="Gene3D" id="3.10.20.590">
    <property type="match status" value="1"/>
</dbReference>
<dbReference type="Gene3D" id="3.40.50.620">
    <property type="entry name" value="HUPs"/>
    <property type="match status" value="2"/>
</dbReference>
<dbReference type="Gene3D" id="1.10.730.10">
    <property type="entry name" value="Isoleucyl-tRNA Synthetase, Domain 1"/>
    <property type="match status" value="1"/>
</dbReference>
<dbReference type="Gene3D" id="3.90.740.10">
    <property type="entry name" value="Valyl/Leucyl/Isoleucyl-tRNA synthetase, editing domain"/>
    <property type="match status" value="1"/>
</dbReference>
<dbReference type="HAMAP" id="MF_00049_B">
    <property type="entry name" value="Leu_tRNA_synth_B"/>
    <property type="match status" value="1"/>
</dbReference>
<dbReference type="InterPro" id="IPR001412">
    <property type="entry name" value="aa-tRNA-synth_I_CS"/>
</dbReference>
<dbReference type="InterPro" id="IPR002300">
    <property type="entry name" value="aa-tRNA-synth_Ia"/>
</dbReference>
<dbReference type="InterPro" id="IPR002302">
    <property type="entry name" value="Leu-tRNA-ligase"/>
</dbReference>
<dbReference type="InterPro" id="IPR025709">
    <property type="entry name" value="Leu_tRNA-synth_edit"/>
</dbReference>
<dbReference type="InterPro" id="IPR013155">
    <property type="entry name" value="M/V/L/I-tRNA-synth_anticd-bd"/>
</dbReference>
<dbReference type="InterPro" id="IPR015413">
    <property type="entry name" value="Methionyl/Leucyl_tRNA_Synth"/>
</dbReference>
<dbReference type="InterPro" id="IPR014729">
    <property type="entry name" value="Rossmann-like_a/b/a_fold"/>
</dbReference>
<dbReference type="InterPro" id="IPR009080">
    <property type="entry name" value="tRNAsynth_Ia_anticodon-bd"/>
</dbReference>
<dbReference type="InterPro" id="IPR009008">
    <property type="entry name" value="Val/Leu/Ile-tRNA-synth_edit"/>
</dbReference>
<dbReference type="NCBIfam" id="TIGR00396">
    <property type="entry name" value="leuS_bact"/>
    <property type="match status" value="1"/>
</dbReference>
<dbReference type="PANTHER" id="PTHR43740:SF2">
    <property type="entry name" value="LEUCINE--TRNA LIGASE, MITOCHONDRIAL"/>
    <property type="match status" value="1"/>
</dbReference>
<dbReference type="PANTHER" id="PTHR43740">
    <property type="entry name" value="LEUCYL-TRNA SYNTHETASE"/>
    <property type="match status" value="1"/>
</dbReference>
<dbReference type="Pfam" id="PF08264">
    <property type="entry name" value="Anticodon_1"/>
    <property type="match status" value="1"/>
</dbReference>
<dbReference type="Pfam" id="PF00133">
    <property type="entry name" value="tRNA-synt_1"/>
    <property type="match status" value="2"/>
</dbReference>
<dbReference type="Pfam" id="PF13603">
    <property type="entry name" value="tRNA-synt_1_2"/>
    <property type="match status" value="1"/>
</dbReference>
<dbReference type="Pfam" id="PF09334">
    <property type="entry name" value="tRNA-synt_1g"/>
    <property type="match status" value="1"/>
</dbReference>
<dbReference type="PRINTS" id="PR00985">
    <property type="entry name" value="TRNASYNTHLEU"/>
</dbReference>
<dbReference type="SUPFAM" id="SSF47323">
    <property type="entry name" value="Anticodon-binding domain of a subclass of class I aminoacyl-tRNA synthetases"/>
    <property type="match status" value="1"/>
</dbReference>
<dbReference type="SUPFAM" id="SSF52374">
    <property type="entry name" value="Nucleotidylyl transferase"/>
    <property type="match status" value="1"/>
</dbReference>
<dbReference type="SUPFAM" id="SSF50677">
    <property type="entry name" value="ValRS/IleRS/LeuRS editing domain"/>
    <property type="match status" value="1"/>
</dbReference>
<dbReference type="PROSITE" id="PS00178">
    <property type="entry name" value="AA_TRNA_LIGASE_I"/>
    <property type="match status" value="1"/>
</dbReference>
<proteinExistence type="inferred from homology"/>
<name>SYL_BARQU</name>